<protein>
    <recommendedName>
        <fullName>Regenerating islet-derived protein 4</fullName>
        <shortName>REG-4</shortName>
    </recommendedName>
</protein>
<comment type="function">
    <text evidence="1">Calcium-independent lectin displaying mannose-binding specificity and able to maintain carbohydrate recognition activity in an acidic environment. May be involved in inflammatory and metaplastic responses of the gastrointestinal epithelium (By similarity).</text>
</comment>
<comment type="subcellular location">
    <subcellularLocation>
        <location evidence="1">Secreted</location>
    </subcellularLocation>
</comment>
<dbReference type="EMBL" id="AB164049">
    <property type="protein sequence ID" value="BAD38673.1"/>
    <property type="molecule type" value="mRNA"/>
</dbReference>
<dbReference type="RefSeq" id="NP_001004096.1">
    <property type="nucleotide sequence ID" value="NM_001004096.2"/>
</dbReference>
<dbReference type="RefSeq" id="XP_006233071.1">
    <property type="nucleotide sequence ID" value="XM_006233009.3"/>
</dbReference>
<dbReference type="RefSeq" id="XP_008759543.1">
    <property type="nucleotide sequence ID" value="XM_008761321.2"/>
</dbReference>
<dbReference type="RefSeq" id="XP_017446498.1">
    <property type="nucleotide sequence ID" value="XM_017591009.1"/>
</dbReference>
<dbReference type="SMR" id="Q68AX7"/>
<dbReference type="STRING" id="10116.ENSRNOP00000025821"/>
<dbReference type="GlyCosmos" id="Q68AX7">
    <property type="glycosylation" value="3 sites, No reported glycans"/>
</dbReference>
<dbReference type="GlyGen" id="Q68AX7">
    <property type="glycosylation" value="3 sites"/>
</dbReference>
<dbReference type="PhosphoSitePlus" id="Q68AX7"/>
<dbReference type="PaxDb" id="10116-ENSRNOP00000025821"/>
<dbReference type="Ensembl" id="ENSRNOT00000025821.3">
    <property type="protein sequence ID" value="ENSRNOP00000025821.2"/>
    <property type="gene ID" value="ENSRNOG00000019046.3"/>
</dbReference>
<dbReference type="GeneID" id="445583"/>
<dbReference type="KEGG" id="rno:445583"/>
<dbReference type="UCSC" id="RGD:1303341">
    <property type="organism name" value="rat"/>
</dbReference>
<dbReference type="AGR" id="RGD:1303341"/>
<dbReference type="CTD" id="83998"/>
<dbReference type="RGD" id="1303341">
    <property type="gene designation" value="Reg4"/>
</dbReference>
<dbReference type="eggNOG" id="KOG4297">
    <property type="taxonomic scope" value="Eukaryota"/>
</dbReference>
<dbReference type="GeneTree" id="ENSGT00940000161011"/>
<dbReference type="HOGENOM" id="CLU_049894_10_1_1"/>
<dbReference type="InParanoid" id="Q68AX7"/>
<dbReference type="OMA" id="RSHCYGY"/>
<dbReference type="OrthoDB" id="441660at2759"/>
<dbReference type="PhylomeDB" id="Q68AX7"/>
<dbReference type="PRO" id="PR:Q68AX7"/>
<dbReference type="Proteomes" id="UP000002494">
    <property type="component" value="Chromosome 2"/>
</dbReference>
<dbReference type="Bgee" id="ENSRNOG00000019046">
    <property type="expression patterns" value="Expressed in jejunum and 11 other cell types or tissues"/>
</dbReference>
<dbReference type="GO" id="GO:0005737">
    <property type="term" value="C:cytoplasm"/>
    <property type="evidence" value="ECO:0000266"/>
    <property type="project" value="RGD"/>
</dbReference>
<dbReference type="GO" id="GO:0005576">
    <property type="term" value="C:extracellular region"/>
    <property type="evidence" value="ECO:0007669"/>
    <property type="project" value="UniProtKB-SubCell"/>
</dbReference>
<dbReference type="GO" id="GO:0008201">
    <property type="term" value="F:heparin binding"/>
    <property type="evidence" value="ECO:0000266"/>
    <property type="project" value="RGD"/>
</dbReference>
<dbReference type="GO" id="GO:2001065">
    <property type="term" value="F:mannan binding"/>
    <property type="evidence" value="ECO:0000266"/>
    <property type="project" value="RGD"/>
</dbReference>
<dbReference type="GO" id="GO:0038023">
    <property type="term" value="F:signaling receptor activity"/>
    <property type="evidence" value="ECO:0000318"/>
    <property type="project" value="GO_Central"/>
</dbReference>
<dbReference type="GO" id="GO:0009617">
    <property type="term" value="P:response to bacterium"/>
    <property type="evidence" value="ECO:0000266"/>
    <property type="project" value="RGD"/>
</dbReference>
<dbReference type="CDD" id="cd03594">
    <property type="entry name" value="CLECT_REG-1_like"/>
    <property type="match status" value="1"/>
</dbReference>
<dbReference type="FunFam" id="3.10.100.10:FF:000015">
    <property type="entry name" value="C-type lectin Cal"/>
    <property type="match status" value="1"/>
</dbReference>
<dbReference type="Gene3D" id="3.10.100.10">
    <property type="entry name" value="Mannose-Binding Protein A, subunit A"/>
    <property type="match status" value="1"/>
</dbReference>
<dbReference type="InterPro" id="IPR001304">
    <property type="entry name" value="C-type_lectin-like"/>
</dbReference>
<dbReference type="InterPro" id="IPR016186">
    <property type="entry name" value="C-type_lectin-like/link_sf"/>
</dbReference>
<dbReference type="InterPro" id="IPR050111">
    <property type="entry name" value="C-type_lectin/snaclec_domain"/>
</dbReference>
<dbReference type="InterPro" id="IPR016187">
    <property type="entry name" value="CTDL_fold"/>
</dbReference>
<dbReference type="PANTHER" id="PTHR22803">
    <property type="entry name" value="MANNOSE, PHOSPHOLIPASE, LECTIN RECEPTOR RELATED"/>
    <property type="match status" value="1"/>
</dbReference>
<dbReference type="Pfam" id="PF00059">
    <property type="entry name" value="Lectin_C"/>
    <property type="match status" value="1"/>
</dbReference>
<dbReference type="PRINTS" id="PR01504">
    <property type="entry name" value="PNCREATITSAP"/>
</dbReference>
<dbReference type="SMART" id="SM00034">
    <property type="entry name" value="CLECT"/>
    <property type="match status" value="1"/>
</dbReference>
<dbReference type="SUPFAM" id="SSF56436">
    <property type="entry name" value="C-type lectin-like"/>
    <property type="match status" value="1"/>
</dbReference>
<dbReference type="PROSITE" id="PS50041">
    <property type="entry name" value="C_TYPE_LECTIN_2"/>
    <property type="match status" value="1"/>
</dbReference>
<reference key="1">
    <citation type="submission" date="2004-02" db="EMBL/GenBank/DDBJ databases">
        <title>Differential regulation of Reg family member expression after peripheral nerve injury.</title>
        <authorList>
            <person name="Namikawa K."/>
            <person name="Murakami K."/>
            <person name="Fukushima M."/>
            <person name="Kiyama H."/>
        </authorList>
    </citation>
    <scope>NUCLEOTIDE SEQUENCE [MRNA]</scope>
    <source>
        <strain>Wistar</strain>
        <tissue>Ileum</tissue>
    </source>
</reference>
<keyword id="KW-1015">Disulfide bond</keyword>
<keyword id="KW-0325">Glycoprotein</keyword>
<keyword id="KW-0430">Lectin</keyword>
<keyword id="KW-1185">Reference proteome</keyword>
<keyword id="KW-0964">Secreted</keyword>
<keyword id="KW-0732">Signal</keyword>
<organism>
    <name type="scientific">Rattus norvegicus</name>
    <name type="common">Rat</name>
    <dbReference type="NCBI Taxonomy" id="10116"/>
    <lineage>
        <taxon>Eukaryota</taxon>
        <taxon>Metazoa</taxon>
        <taxon>Chordata</taxon>
        <taxon>Craniata</taxon>
        <taxon>Vertebrata</taxon>
        <taxon>Euteleostomi</taxon>
        <taxon>Mammalia</taxon>
        <taxon>Eutheria</taxon>
        <taxon>Euarchontoglires</taxon>
        <taxon>Glires</taxon>
        <taxon>Rodentia</taxon>
        <taxon>Myomorpha</taxon>
        <taxon>Muroidea</taxon>
        <taxon>Muridae</taxon>
        <taxon>Murinae</taxon>
        <taxon>Rattus</taxon>
    </lineage>
</organism>
<proteinExistence type="evidence at transcript level"/>
<feature type="signal peptide" evidence="1">
    <location>
        <begin position="1"/>
        <end position="22"/>
    </location>
</feature>
<feature type="chain" id="PRO_0000017439" description="Regenerating islet-derived protein 4">
    <location>
        <begin position="23"/>
        <end position="157"/>
    </location>
</feature>
<feature type="domain" description="C-type lectin" evidence="3">
    <location>
        <begin position="36"/>
        <end position="154"/>
    </location>
</feature>
<feature type="binding site" evidence="1">
    <location>
        <begin position="97"/>
        <end position="101"/>
    </location>
    <ligand>
        <name>a carbohydrate</name>
        <dbReference type="ChEBI" id="CHEBI:16646"/>
    </ligand>
</feature>
<feature type="binding site" evidence="1">
    <location>
        <begin position="134"/>
        <end position="136"/>
    </location>
    <ligand>
        <name>a carbohydrate</name>
        <dbReference type="ChEBI" id="CHEBI:16646"/>
    </ligand>
</feature>
<feature type="glycosylation site" description="N-linked (GlcNAc...) asparagine" evidence="2">
    <location>
        <position position="49"/>
    </location>
</feature>
<feature type="glycosylation site" description="N-linked (GlcNAc...) asparagine" evidence="2">
    <location>
        <position position="62"/>
    </location>
</feature>
<feature type="glycosylation site" description="N-linked (GlcNAc...) asparagine" evidence="2">
    <location>
        <position position="101"/>
    </location>
</feature>
<feature type="disulfide bond" evidence="3">
    <location>
        <begin position="29"/>
        <end position="40"/>
    </location>
</feature>
<feature type="disulfide bond" evidence="3">
    <location>
        <begin position="57"/>
        <end position="153"/>
    </location>
</feature>
<feature type="disulfide bond" evidence="3">
    <location>
        <begin position="128"/>
        <end position="145"/>
    </location>
</feature>
<gene>
    <name type="primary">Reg4</name>
</gene>
<sequence>MASKCVRLLLLLSWVAGPEVLSDILRPSCASGWFNYRSHCYGYFRKLRNWSHAELECQSYGNGSHLASVLNPKEASVISKYITGYQRSLPVWIGLHDPQKNASWQWIDGSTNQYRPWSPRTKSEARHCTEMNPKDKFLTWNKNGCTKRQHFLCKYRP</sequence>
<accession>Q68AX7</accession>
<name>REG4_RAT</name>
<evidence type="ECO:0000250" key="1"/>
<evidence type="ECO:0000255" key="2"/>
<evidence type="ECO:0000255" key="3">
    <source>
        <dbReference type="PROSITE-ProRule" id="PRU00040"/>
    </source>
</evidence>